<feature type="chain" id="PRO_0000230502" description="Small ribosomal subunit protein uS13">
    <location>
        <begin position="1"/>
        <end position="122"/>
    </location>
</feature>
<feature type="region of interest" description="Disordered" evidence="2">
    <location>
        <begin position="95"/>
        <end position="122"/>
    </location>
</feature>
<keyword id="KW-1185">Reference proteome</keyword>
<keyword id="KW-0687">Ribonucleoprotein</keyword>
<keyword id="KW-0689">Ribosomal protein</keyword>
<keyword id="KW-0694">RNA-binding</keyword>
<keyword id="KW-0699">rRNA-binding</keyword>
<keyword id="KW-0820">tRNA-binding</keyword>
<protein>
    <recommendedName>
        <fullName evidence="1">Small ribosomal subunit protein uS13</fullName>
    </recommendedName>
    <alternativeName>
        <fullName evidence="3">30S ribosomal protein S13</fullName>
    </alternativeName>
</protein>
<organism>
    <name type="scientific">Nitratidesulfovibrio vulgaris (strain ATCC 29579 / DSM 644 / CCUG 34227 / NCIMB 8303 / VKM B-1760 / Hildenborough)</name>
    <name type="common">Desulfovibrio vulgaris</name>
    <dbReference type="NCBI Taxonomy" id="882"/>
    <lineage>
        <taxon>Bacteria</taxon>
        <taxon>Pseudomonadati</taxon>
        <taxon>Thermodesulfobacteriota</taxon>
        <taxon>Desulfovibrionia</taxon>
        <taxon>Desulfovibrionales</taxon>
        <taxon>Desulfovibrionaceae</taxon>
        <taxon>Nitratidesulfovibrio</taxon>
    </lineage>
</organism>
<comment type="function">
    <text evidence="1">Located at the top of the head of the 30S subunit, it contacts several helices of the 16S rRNA. In the 70S ribosome it contacts the 23S rRNA (bridge B1a) and protein L5 of the 50S subunit (bridge B1b), connecting the 2 subunits; these bridges are implicated in subunit movement. Contacts the tRNAs in the A and P-sites.</text>
</comment>
<comment type="subunit">
    <text evidence="1">Part of the 30S ribosomal subunit. Forms a loose heterodimer with protein S19. Forms two bridges to the 50S subunit in the 70S ribosome.</text>
</comment>
<comment type="similarity">
    <text evidence="1">Belongs to the universal ribosomal protein uS13 family.</text>
</comment>
<gene>
    <name evidence="1" type="primary">rpsM</name>
    <name type="ordered locus">DVU_1326</name>
    <name type="ORF">DVU__1326</name>
</gene>
<name>RS13_NITV2</name>
<reference key="1">
    <citation type="journal article" date="2004" name="Nat. Biotechnol.">
        <title>The genome sequence of the anaerobic, sulfate-reducing bacterium Desulfovibrio vulgaris Hildenborough.</title>
        <authorList>
            <person name="Heidelberg J.F."/>
            <person name="Seshadri R."/>
            <person name="Haveman S.A."/>
            <person name="Hemme C.L."/>
            <person name="Paulsen I.T."/>
            <person name="Kolonay J.F."/>
            <person name="Eisen J.A."/>
            <person name="Ward N.L."/>
            <person name="Methe B.A."/>
            <person name="Brinkac L.M."/>
            <person name="Daugherty S.C."/>
            <person name="DeBoy R.T."/>
            <person name="Dodson R.J."/>
            <person name="Durkin A.S."/>
            <person name="Madupu R."/>
            <person name="Nelson W.C."/>
            <person name="Sullivan S.A."/>
            <person name="Fouts D.E."/>
            <person name="Haft D.H."/>
            <person name="Selengut J."/>
            <person name="Peterson J.D."/>
            <person name="Davidsen T.M."/>
            <person name="Zafar N."/>
            <person name="Zhou L."/>
            <person name="Radune D."/>
            <person name="Dimitrov G."/>
            <person name="Hance M."/>
            <person name="Tran K."/>
            <person name="Khouri H.M."/>
            <person name="Gill J."/>
            <person name="Utterback T.R."/>
            <person name="Feldblyum T.V."/>
            <person name="Wall J.D."/>
            <person name="Voordouw G."/>
            <person name="Fraser C.M."/>
        </authorList>
    </citation>
    <scope>NUCLEOTIDE SEQUENCE [LARGE SCALE GENOMIC DNA]</scope>
    <source>
        <strain>ATCC 29579 / DSM 644 / CCUG 34227 / NCIMB 8303 / VKM B-1760 / Hildenborough</strain>
    </source>
</reference>
<accession>Q72CF7</accession>
<evidence type="ECO:0000255" key="1">
    <source>
        <dbReference type="HAMAP-Rule" id="MF_01315"/>
    </source>
</evidence>
<evidence type="ECO:0000256" key="2">
    <source>
        <dbReference type="SAM" id="MobiDB-lite"/>
    </source>
</evidence>
<evidence type="ECO:0000305" key="3"/>
<sequence length="122" mass="13854">MARIAGVDLPRGKRVDIALTYIYGIGRATALQILDATGVNWTRNVDDLNADEVNEIRKEIEQNHKVEGDLRREISANIKRLMDIGCYRGLRHRRGLPVRGQRTHTNARTRKGPRRGTVGKKK</sequence>
<proteinExistence type="inferred from homology"/>
<dbReference type="EMBL" id="AE017285">
    <property type="protein sequence ID" value="AAS95804.1"/>
    <property type="molecule type" value="Genomic_DNA"/>
</dbReference>
<dbReference type="RefSeq" id="WP_010938621.1">
    <property type="nucleotide sequence ID" value="NC_002937.3"/>
</dbReference>
<dbReference type="RefSeq" id="YP_010545.1">
    <property type="nucleotide sequence ID" value="NC_002937.3"/>
</dbReference>
<dbReference type="SMR" id="Q72CF7"/>
<dbReference type="STRING" id="882.DVU_1326"/>
<dbReference type="PaxDb" id="882-DVU_1326"/>
<dbReference type="EnsemblBacteria" id="AAS95804">
    <property type="protein sequence ID" value="AAS95804"/>
    <property type="gene ID" value="DVU_1326"/>
</dbReference>
<dbReference type="KEGG" id="dvu:DVU_1326"/>
<dbReference type="PATRIC" id="fig|882.5.peg.1238"/>
<dbReference type="eggNOG" id="COG0099">
    <property type="taxonomic scope" value="Bacteria"/>
</dbReference>
<dbReference type="HOGENOM" id="CLU_103849_1_2_7"/>
<dbReference type="OrthoDB" id="9803610at2"/>
<dbReference type="PhylomeDB" id="Q72CF7"/>
<dbReference type="Proteomes" id="UP000002194">
    <property type="component" value="Chromosome"/>
</dbReference>
<dbReference type="GO" id="GO:0005829">
    <property type="term" value="C:cytosol"/>
    <property type="evidence" value="ECO:0007669"/>
    <property type="project" value="TreeGrafter"/>
</dbReference>
<dbReference type="GO" id="GO:0015935">
    <property type="term" value="C:small ribosomal subunit"/>
    <property type="evidence" value="ECO:0007669"/>
    <property type="project" value="TreeGrafter"/>
</dbReference>
<dbReference type="GO" id="GO:0019843">
    <property type="term" value="F:rRNA binding"/>
    <property type="evidence" value="ECO:0007669"/>
    <property type="project" value="UniProtKB-UniRule"/>
</dbReference>
<dbReference type="GO" id="GO:0003735">
    <property type="term" value="F:structural constituent of ribosome"/>
    <property type="evidence" value="ECO:0007669"/>
    <property type="project" value="InterPro"/>
</dbReference>
<dbReference type="GO" id="GO:0000049">
    <property type="term" value="F:tRNA binding"/>
    <property type="evidence" value="ECO:0007669"/>
    <property type="project" value="UniProtKB-UniRule"/>
</dbReference>
<dbReference type="GO" id="GO:0006412">
    <property type="term" value="P:translation"/>
    <property type="evidence" value="ECO:0007669"/>
    <property type="project" value="UniProtKB-UniRule"/>
</dbReference>
<dbReference type="FunFam" id="1.10.8.50:FF:000001">
    <property type="entry name" value="30S ribosomal protein S13"/>
    <property type="match status" value="1"/>
</dbReference>
<dbReference type="FunFam" id="4.10.910.10:FF:000001">
    <property type="entry name" value="30S ribosomal protein S13"/>
    <property type="match status" value="1"/>
</dbReference>
<dbReference type="Gene3D" id="1.10.8.50">
    <property type="match status" value="1"/>
</dbReference>
<dbReference type="Gene3D" id="4.10.910.10">
    <property type="entry name" value="30s ribosomal protein s13, domain 2"/>
    <property type="match status" value="1"/>
</dbReference>
<dbReference type="HAMAP" id="MF_01315">
    <property type="entry name" value="Ribosomal_uS13"/>
    <property type="match status" value="1"/>
</dbReference>
<dbReference type="InterPro" id="IPR027437">
    <property type="entry name" value="Rbsml_uS13_C"/>
</dbReference>
<dbReference type="InterPro" id="IPR001892">
    <property type="entry name" value="Ribosomal_uS13"/>
</dbReference>
<dbReference type="InterPro" id="IPR010979">
    <property type="entry name" value="Ribosomal_uS13-like_H2TH"/>
</dbReference>
<dbReference type="InterPro" id="IPR019980">
    <property type="entry name" value="Ribosomal_uS13_bac-type"/>
</dbReference>
<dbReference type="InterPro" id="IPR018269">
    <property type="entry name" value="Ribosomal_uS13_CS"/>
</dbReference>
<dbReference type="NCBIfam" id="TIGR03631">
    <property type="entry name" value="uS13_bact"/>
    <property type="match status" value="1"/>
</dbReference>
<dbReference type="PANTHER" id="PTHR10871">
    <property type="entry name" value="30S RIBOSOMAL PROTEIN S13/40S RIBOSOMAL PROTEIN S18"/>
    <property type="match status" value="1"/>
</dbReference>
<dbReference type="PANTHER" id="PTHR10871:SF1">
    <property type="entry name" value="SMALL RIBOSOMAL SUBUNIT PROTEIN US13M"/>
    <property type="match status" value="1"/>
</dbReference>
<dbReference type="Pfam" id="PF00416">
    <property type="entry name" value="Ribosomal_S13"/>
    <property type="match status" value="1"/>
</dbReference>
<dbReference type="PIRSF" id="PIRSF002134">
    <property type="entry name" value="Ribosomal_S13"/>
    <property type="match status" value="1"/>
</dbReference>
<dbReference type="SUPFAM" id="SSF46946">
    <property type="entry name" value="S13-like H2TH domain"/>
    <property type="match status" value="1"/>
</dbReference>
<dbReference type="PROSITE" id="PS00646">
    <property type="entry name" value="RIBOSOMAL_S13_1"/>
    <property type="match status" value="1"/>
</dbReference>
<dbReference type="PROSITE" id="PS50159">
    <property type="entry name" value="RIBOSOMAL_S13_2"/>
    <property type="match status" value="1"/>
</dbReference>